<comment type="function">
    <text>Ferredoxins are iron-sulfur proteins that transfer electrons in a wide variety of metabolic reactions.</text>
</comment>
<comment type="cofactor">
    <cofactor>
        <name>[4Fe-4S] cluster</name>
        <dbReference type="ChEBI" id="CHEBI:49883"/>
    </cofactor>
    <text>Binds 2 [4Fe-4S] clusters.</text>
</comment>
<protein>
    <recommendedName>
        <fullName>Ferredoxin-1</fullName>
    </recommendedName>
    <alternativeName>
        <fullName>Ferredoxin I</fullName>
        <shortName>FdI</shortName>
    </alternativeName>
</protein>
<keyword id="KW-0004">4Fe-4S</keyword>
<keyword id="KW-0903">Direct protein sequencing</keyword>
<keyword id="KW-0249">Electron transport</keyword>
<keyword id="KW-0408">Iron</keyword>
<keyword id="KW-0411">Iron-sulfur</keyword>
<keyword id="KW-0479">Metal-binding</keyword>
<keyword id="KW-0677">Repeat</keyword>
<keyword id="KW-0813">Transport</keyword>
<accession>P00204</accession>
<reference key="1">
    <citation type="journal article" date="1974" name="Biochemistry">
        <title>Amino acid sequence of ferredoxin from a photosynthetic green bacterium, Chlorobium limicola.</title>
        <authorList>
            <person name="Tanaka M."/>
            <person name="Haniu M."/>
            <person name="Yasunobu K.T."/>
            <person name="Evans M.C.W."/>
            <person name="Rao K.K."/>
        </authorList>
    </citation>
    <scope>PROTEIN SEQUENCE</scope>
</reference>
<proteinExistence type="evidence at protein level"/>
<sequence length="60" mass="6223">ALYITEECTYCGACEPECPVTAISAGDDIYVIDANTCNECAGLDEQACVAVCPAECIVQG</sequence>
<name>FER1_CHLLI</name>
<evidence type="ECO:0000250" key="1"/>
<evidence type="ECO:0000255" key="2">
    <source>
        <dbReference type="PROSITE-ProRule" id="PRU00711"/>
    </source>
</evidence>
<feature type="chain" id="PRO_0000159122" description="Ferredoxin-1">
    <location>
        <begin position="1"/>
        <end position="60"/>
    </location>
</feature>
<feature type="domain" description="4Fe-4S ferredoxin-type 1" evidence="2">
    <location>
        <begin position="2"/>
        <end position="27"/>
    </location>
</feature>
<feature type="domain" description="4Fe-4S ferredoxin-type 2" evidence="2">
    <location>
        <begin position="28"/>
        <end position="60"/>
    </location>
</feature>
<feature type="binding site" evidence="1">
    <location>
        <position position="8"/>
    </location>
    <ligand>
        <name>[4Fe-4S] cluster</name>
        <dbReference type="ChEBI" id="CHEBI:49883"/>
        <label>1</label>
    </ligand>
</feature>
<feature type="binding site" evidence="1">
    <location>
        <position position="11"/>
    </location>
    <ligand>
        <name>[4Fe-4S] cluster</name>
        <dbReference type="ChEBI" id="CHEBI:49883"/>
        <label>1</label>
    </ligand>
</feature>
<feature type="binding site" evidence="1">
    <location>
        <position position="14"/>
    </location>
    <ligand>
        <name>[4Fe-4S] cluster</name>
        <dbReference type="ChEBI" id="CHEBI:49883"/>
        <label>1</label>
    </ligand>
</feature>
<feature type="binding site" evidence="1">
    <location>
        <position position="18"/>
    </location>
    <ligand>
        <name>[4Fe-4S] cluster</name>
        <dbReference type="ChEBI" id="CHEBI:49883"/>
        <label>2</label>
    </ligand>
</feature>
<feature type="binding site" evidence="1">
    <location>
        <position position="37"/>
    </location>
    <ligand>
        <name>[4Fe-4S] cluster</name>
        <dbReference type="ChEBI" id="CHEBI:49883"/>
        <label>2</label>
    </ligand>
</feature>
<feature type="binding site" evidence="1">
    <location>
        <position position="40"/>
    </location>
    <ligand>
        <name>[4Fe-4S] cluster</name>
        <dbReference type="ChEBI" id="CHEBI:49883"/>
        <label>2</label>
    </ligand>
</feature>
<feature type="binding site" evidence="1">
    <location>
        <position position="48"/>
    </location>
    <ligand>
        <name>[4Fe-4S] cluster</name>
        <dbReference type="ChEBI" id="CHEBI:49883"/>
        <label>2</label>
    </ligand>
</feature>
<feature type="binding site" evidence="1">
    <location>
        <position position="52"/>
    </location>
    <ligand>
        <name>[4Fe-4S] cluster</name>
        <dbReference type="ChEBI" id="CHEBI:49883"/>
        <label>1</label>
    </ligand>
</feature>
<organism>
    <name type="scientific">Chlorobium limicola</name>
    <dbReference type="NCBI Taxonomy" id="1092"/>
    <lineage>
        <taxon>Bacteria</taxon>
        <taxon>Pseudomonadati</taxon>
        <taxon>Chlorobiota</taxon>
        <taxon>Chlorobiia</taxon>
        <taxon>Chlorobiales</taxon>
        <taxon>Chlorobiaceae</taxon>
        <taxon>Chlorobium/Pelodictyon group</taxon>
        <taxon>Chlorobium</taxon>
    </lineage>
</organism>
<dbReference type="PIR" id="A00206">
    <property type="entry name" value="FECI"/>
</dbReference>
<dbReference type="SMR" id="P00204"/>
<dbReference type="GO" id="GO:0051539">
    <property type="term" value="F:4 iron, 4 sulfur cluster binding"/>
    <property type="evidence" value="ECO:0007669"/>
    <property type="project" value="UniProtKB-KW"/>
</dbReference>
<dbReference type="GO" id="GO:0046872">
    <property type="term" value="F:metal ion binding"/>
    <property type="evidence" value="ECO:0007669"/>
    <property type="project" value="UniProtKB-KW"/>
</dbReference>
<dbReference type="FunFam" id="3.30.70.20:FF:000045">
    <property type="entry name" value="Ferredoxin, 4Fe-4S"/>
    <property type="match status" value="1"/>
</dbReference>
<dbReference type="Gene3D" id="3.30.70.20">
    <property type="match status" value="1"/>
</dbReference>
<dbReference type="InterPro" id="IPR017896">
    <property type="entry name" value="4Fe4S_Fe-S-bd"/>
</dbReference>
<dbReference type="InterPro" id="IPR017900">
    <property type="entry name" value="4Fe4S_Fe_S_CS"/>
</dbReference>
<dbReference type="Pfam" id="PF00037">
    <property type="entry name" value="Fer4"/>
    <property type="match status" value="1"/>
</dbReference>
<dbReference type="SUPFAM" id="SSF54862">
    <property type="entry name" value="4Fe-4S ferredoxins"/>
    <property type="match status" value="1"/>
</dbReference>
<dbReference type="PROSITE" id="PS00198">
    <property type="entry name" value="4FE4S_FER_1"/>
    <property type="match status" value="1"/>
</dbReference>
<dbReference type="PROSITE" id="PS51379">
    <property type="entry name" value="4FE4S_FER_2"/>
    <property type="match status" value="2"/>
</dbReference>